<proteinExistence type="inferred from homology"/>
<gene>
    <name evidence="1" type="primary">aroK</name>
    <name type="ordered locus">Gmet_0977</name>
</gene>
<protein>
    <recommendedName>
        <fullName evidence="1">Shikimate kinase</fullName>
        <shortName evidence="1">SK</shortName>
        <ecNumber evidence="1">2.7.1.71</ecNumber>
    </recommendedName>
</protein>
<comment type="function">
    <text evidence="1">Catalyzes the specific phosphorylation of the 3-hydroxyl group of shikimic acid using ATP as a cosubstrate.</text>
</comment>
<comment type="catalytic activity">
    <reaction evidence="1">
        <text>shikimate + ATP = 3-phosphoshikimate + ADP + H(+)</text>
        <dbReference type="Rhea" id="RHEA:13121"/>
        <dbReference type="ChEBI" id="CHEBI:15378"/>
        <dbReference type="ChEBI" id="CHEBI:30616"/>
        <dbReference type="ChEBI" id="CHEBI:36208"/>
        <dbReference type="ChEBI" id="CHEBI:145989"/>
        <dbReference type="ChEBI" id="CHEBI:456216"/>
        <dbReference type="EC" id="2.7.1.71"/>
    </reaction>
</comment>
<comment type="cofactor">
    <cofactor evidence="1">
        <name>Mg(2+)</name>
        <dbReference type="ChEBI" id="CHEBI:18420"/>
    </cofactor>
    <text evidence="1">Binds 1 Mg(2+) ion per subunit.</text>
</comment>
<comment type="pathway">
    <text evidence="1">Metabolic intermediate biosynthesis; chorismate biosynthesis; chorismate from D-erythrose 4-phosphate and phosphoenolpyruvate: step 5/7.</text>
</comment>
<comment type="subunit">
    <text evidence="1">Monomer.</text>
</comment>
<comment type="subcellular location">
    <subcellularLocation>
        <location evidence="1">Cytoplasm</location>
    </subcellularLocation>
</comment>
<comment type="similarity">
    <text evidence="1">Belongs to the shikimate kinase family.</text>
</comment>
<evidence type="ECO:0000255" key="1">
    <source>
        <dbReference type="HAMAP-Rule" id="MF_00109"/>
    </source>
</evidence>
<accession>Q39X05</accession>
<name>AROK_GEOMG</name>
<dbReference type="EC" id="2.7.1.71" evidence="1"/>
<dbReference type="EMBL" id="CP000148">
    <property type="protein sequence ID" value="ABB31219.2"/>
    <property type="molecule type" value="Genomic_DNA"/>
</dbReference>
<dbReference type="RefSeq" id="WP_004514372.1">
    <property type="nucleotide sequence ID" value="NC_007517.1"/>
</dbReference>
<dbReference type="SMR" id="Q39X05"/>
<dbReference type="STRING" id="269799.Gmet_0977"/>
<dbReference type="KEGG" id="gme:Gmet_0977"/>
<dbReference type="eggNOG" id="COG0703">
    <property type="taxonomic scope" value="Bacteria"/>
</dbReference>
<dbReference type="HOGENOM" id="CLU_057607_4_0_7"/>
<dbReference type="UniPathway" id="UPA00053">
    <property type="reaction ID" value="UER00088"/>
</dbReference>
<dbReference type="Proteomes" id="UP000007073">
    <property type="component" value="Chromosome"/>
</dbReference>
<dbReference type="GO" id="GO:0005829">
    <property type="term" value="C:cytosol"/>
    <property type="evidence" value="ECO:0007669"/>
    <property type="project" value="TreeGrafter"/>
</dbReference>
<dbReference type="GO" id="GO:0005524">
    <property type="term" value="F:ATP binding"/>
    <property type="evidence" value="ECO:0007669"/>
    <property type="project" value="UniProtKB-UniRule"/>
</dbReference>
<dbReference type="GO" id="GO:0000287">
    <property type="term" value="F:magnesium ion binding"/>
    <property type="evidence" value="ECO:0007669"/>
    <property type="project" value="UniProtKB-UniRule"/>
</dbReference>
<dbReference type="GO" id="GO:0004765">
    <property type="term" value="F:shikimate kinase activity"/>
    <property type="evidence" value="ECO:0007669"/>
    <property type="project" value="UniProtKB-UniRule"/>
</dbReference>
<dbReference type="GO" id="GO:0008652">
    <property type="term" value="P:amino acid biosynthetic process"/>
    <property type="evidence" value="ECO:0007669"/>
    <property type="project" value="UniProtKB-KW"/>
</dbReference>
<dbReference type="GO" id="GO:0009073">
    <property type="term" value="P:aromatic amino acid family biosynthetic process"/>
    <property type="evidence" value="ECO:0007669"/>
    <property type="project" value="UniProtKB-KW"/>
</dbReference>
<dbReference type="GO" id="GO:0009423">
    <property type="term" value="P:chorismate biosynthetic process"/>
    <property type="evidence" value="ECO:0007669"/>
    <property type="project" value="UniProtKB-UniRule"/>
</dbReference>
<dbReference type="CDD" id="cd00464">
    <property type="entry name" value="SK"/>
    <property type="match status" value="1"/>
</dbReference>
<dbReference type="Gene3D" id="3.40.50.300">
    <property type="entry name" value="P-loop containing nucleotide triphosphate hydrolases"/>
    <property type="match status" value="1"/>
</dbReference>
<dbReference type="HAMAP" id="MF_00109">
    <property type="entry name" value="Shikimate_kinase"/>
    <property type="match status" value="1"/>
</dbReference>
<dbReference type="InterPro" id="IPR027417">
    <property type="entry name" value="P-loop_NTPase"/>
</dbReference>
<dbReference type="InterPro" id="IPR031322">
    <property type="entry name" value="Shikimate/glucono_kinase"/>
</dbReference>
<dbReference type="InterPro" id="IPR000623">
    <property type="entry name" value="Shikimate_kinase/TSH1"/>
</dbReference>
<dbReference type="InterPro" id="IPR023000">
    <property type="entry name" value="Shikimate_kinase_CS"/>
</dbReference>
<dbReference type="PANTHER" id="PTHR21087">
    <property type="entry name" value="SHIKIMATE KINASE"/>
    <property type="match status" value="1"/>
</dbReference>
<dbReference type="PANTHER" id="PTHR21087:SF16">
    <property type="entry name" value="SHIKIMATE KINASE 1, CHLOROPLASTIC"/>
    <property type="match status" value="1"/>
</dbReference>
<dbReference type="Pfam" id="PF01202">
    <property type="entry name" value="SKI"/>
    <property type="match status" value="1"/>
</dbReference>
<dbReference type="PRINTS" id="PR01100">
    <property type="entry name" value="SHIKIMTKNASE"/>
</dbReference>
<dbReference type="SUPFAM" id="SSF52540">
    <property type="entry name" value="P-loop containing nucleoside triphosphate hydrolases"/>
    <property type="match status" value="1"/>
</dbReference>
<dbReference type="PROSITE" id="PS01128">
    <property type="entry name" value="SHIKIMATE_KINASE"/>
    <property type="match status" value="1"/>
</dbReference>
<sequence>MATSTISAPSSVRNVILTGFMGTGKSSVGRLLAHRLGFRYCDLDALIVEGEGVSINEIFARHGEPHFRALETEAVRSVSREERCVVSTGGGAVISPENRCLLRKAGVVVNLTATVEEVCRRLREETDRPLLKDDRSGERIAAMMAEREQFYADAELRIDTTGKSVEDVVAEITGYLEGR</sequence>
<keyword id="KW-0028">Amino-acid biosynthesis</keyword>
<keyword id="KW-0057">Aromatic amino acid biosynthesis</keyword>
<keyword id="KW-0067">ATP-binding</keyword>
<keyword id="KW-0963">Cytoplasm</keyword>
<keyword id="KW-0418">Kinase</keyword>
<keyword id="KW-0460">Magnesium</keyword>
<keyword id="KW-0479">Metal-binding</keyword>
<keyword id="KW-0547">Nucleotide-binding</keyword>
<keyword id="KW-1185">Reference proteome</keyword>
<keyword id="KW-0808">Transferase</keyword>
<reference key="1">
    <citation type="journal article" date="2009" name="BMC Microbiol.">
        <title>The genome sequence of Geobacter metallireducens: features of metabolism, physiology and regulation common and dissimilar to Geobacter sulfurreducens.</title>
        <authorList>
            <person name="Aklujkar M."/>
            <person name="Krushkal J."/>
            <person name="DiBartolo G."/>
            <person name="Lapidus A."/>
            <person name="Land M.L."/>
            <person name="Lovley D.R."/>
        </authorList>
    </citation>
    <scope>NUCLEOTIDE SEQUENCE [LARGE SCALE GENOMIC DNA]</scope>
    <source>
        <strain>ATCC 53774 / DSM 7210 / GS-15</strain>
    </source>
</reference>
<feature type="chain" id="PRO_0000237883" description="Shikimate kinase">
    <location>
        <begin position="1"/>
        <end position="179"/>
    </location>
</feature>
<feature type="binding site" evidence="1">
    <location>
        <begin position="22"/>
        <end position="27"/>
    </location>
    <ligand>
        <name>ATP</name>
        <dbReference type="ChEBI" id="CHEBI:30616"/>
    </ligand>
</feature>
<feature type="binding site" evidence="1">
    <location>
        <position position="26"/>
    </location>
    <ligand>
        <name>Mg(2+)</name>
        <dbReference type="ChEBI" id="CHEBI:18420"/>
    </ligand>
</feature>
<feature type="binding site" evidence="1">
    <location>
        <position position="44"/>
    </location>
    <ligand>
        <name>substrate</name>
    </ligand>
</feature>
<feature type="binding site" evidence="1">
    <location>
        <position position="68"/>
    </location>
    <ligand>
        <name>substrate</name>
    </ligand>
</feature>
<feature type="binding site" evidence="1">
    <location>
        <position position="90"/>
    </location>
    <ligand>
        <name>substrate</name>
    </ligand>
</feature>
<feature type="binding site" evidence="1">
    <location>
        <position position="128"/>
    </location>
    <ligand>
        <name>ATP</name>
        <dbReference type="ChEBI" id="CHEBI:30616"/>
    </ligand>
</feature>
<feature type="binding site" evidence="1">
    <location>
        <position position="147"/>
    </location>
    <ligand>
        <name>substrate</name>
    </ligand>
</feature>
<organism>
    <name type="scientific">Geobacter metallireducens (strain ATCC 53774 / DSM 7210 / GS-15)</name>
    <dbReference type="NCBI Taxonomy" id="269799"/>
    <lineage>
        <taxon>Bacteria</taxon>
        <taxon>Pseudomonadati</taxon>
        <taxon>Thermodesulfobacteriota</taxon>
        <taxon>Desulfuromonadia</taxon>
        <taxon>Geobacterales</taxon>
        <taxon>Geobacteraceae</taxon>
        <taxon>Geobacter</taxon>
    </lineage>
</organism>